<comment type="catalytic activity">
    <reaction evidence="2 3 4">
        <text>(S)-mandelate = (R)-mandelate</text>
        <dbReference type="Rhea" id="RHEA:13945"/>
        <dbReference type="ChEBI" id="CHEBI:17756"/>
        <dbReference type="ChEBI" id="CHEBI:32382"/>
        <dbReference type="EC" id="5.1.2.2"/>
    </reaction>
</comment>
<comment type="cofactor">
    <cofactor evidence="1 3 4">
        <name>Mg(2+)</name>
        <dbReference type="ChEBI" id="CHEBI:18420"/>
    </cofactor>
    <text evidence="1 3 4">Divalent metal ions. Magnesium seems to be the preferred ion.</text>
</comment>
<comment type="pathway">
    <text evidence="5">Aromatic compound metabolism; (R)-mandelate degradation; benzoate from (R)-mandelate: step 1/4.</text>
</comment>
<comment type="subunit">
    <text evidence="4">Homooctamer.</text>
</comment>
<comment type="similarity">
    <text evidence="5">Belongs to the mandelate racemase/muconate lactonizing enzyme family.</text>
</comment>
<accession>P11444</accession>
<proteinExistence type="evidence at protein level"/>
<evidence type="ECO:0000269" key="1">
    <source>
    </source>
</evidence>
<evidence type="ECO:0000269" key="2">
    <source>
    </source>
</evidence>
<evidence type="ECO:0000269" key="3">
    <source>
    </source>
</evidence>
<evidence type="ECO:0000269" key="4">
    <source>
    </source>
</evidence>
<evidence type="ECO:0000305" key="5"/>
<evidence type="ECO:0000305" key="6">
    <source>
    </source>
</evidence>
<evidence type="ECO:0007829" key="7">
    <source>
        <dbReference type="PDB" id="4M6U"/>
    </source>
</evidence>
<evidence type="ECO:0007829" key="8">
    <source>
        <dbReference type="PDB" id="4X2P"/>
    </source>
</evidence>
<name>MANR_PSEPU</name>
<keyword id="KW-0002">3D-structure</keyword>
<keyword id="KW-0413">Isomerase</keyword>
<keyword id="KW-0460">Magnesium</keyword>
<keyword id="KW-0463">Mandelate pathway</keyword>
<keyword id="KW-0479">Metal-binding</keyword>
<protein>
    <recommendedName>
        <fullName>Mandelate racemase</fullName>
        <shortName>MR</shortName>
        <ecNumber evidence="2 3 4">5.1.2.2</ecNumber>
    </recommendedName>
</protein>
<gene>
    <name type="primary">mdlA</name>
</gene>
<dbReference type="EC" id="5.1.2.2" evidence="2 3 4"/>
<dbReference type="EMBL" id="M19043">
    <property type="protein sequence ID" value="AAA25887.1"/>
    <property type="molecule type" value="Genomic_DNA"/>
</dbReference>
<dbReference type="EMBL" id="AY143338">
    <property type="protein sequence ID" value="AAC15504.1"/>
    <property type="molecule type" value="Genomic_DNA"/>
</dbReference>
<dbReference type="PIR" id="A28700">
    <property type="entry name" value="A28700"/>
</dbReference>
<dbReference type="RefSeq" id="WP_016501748.1">
    <property type="nucleotide sequence ID" value="NZ_UGUX01000003.1"/>
</dbReference>
<dbReference type="PDB" id="1DTN">
    <property type="method" value="X-ray"/>
    <property type="resolution" value="2.10 A"/>
    <property type="chains" value="A=1-359"/>
</dbReference>
<dbReference type="PDB" id="1MDL">
    <property type="method" value="X-ray"/>
    <property type="resolution" value="1.85 A"/>
    <property type="chains" value="A=1-359"/>
</dbReference>
<dbReference type="PDB" id="1MDR">
    <property type="method" value="X-ray"/>
    <property type="resolution" value="2.10 A"/>
    <property type="chains" value="A=1-359"/>
</dbReference>
<dbReference type="PDB" id="1MNS">
    <property type="method" value="X-ray"/>
    <property type="resolution" value="2.00 A"/>
    <property type="chains" value="A=3-359"/>
</dbReference>
<dbReference type="PDB" id="1MRA">
    <property type="method" value="X-ray"/>
    <property type="resolution" value="2.10 A"/>
    <property type="chains" value="A=1-359"/>
</dbReference>
<dbReference type="PDB" id="2MNR">
    <property type="method" value="X-ray"/>
    <property type="resolution" value="1.90 A"/>
    <property type="chains" value="A=3-359"/>
</dbReference>
<dbReference type="PDB" id="3UXK">
    <property type="method" value="X-ray"/>
    <property type="resolution" value="2.20 A"/>
    <property type="chains" value="A/B/C/D=1-359"/>
</dbReference>
<dbReference type="PDB" id="3UXL">
    <property type="method" value="X-ray"/>
    <property type="resolution" value="2.20 A"/>
    <property type="chains" value="A/B/C/D=1-359"/>
</dbReference>
<dbReference type="PDB" id="4FP1">
    <property type="method" value="X-ray"/>
    <property type="resolution" value="1.68 A"/>
    <property type="chains" value="A/B=1-359"/>
</dbReference>
<dbReference type="PDB" id="4HNC">
    <property type="method" value="X-ray"/>
    <property type="resolution" value="1.89 A"/>
    <property type="chains" value="A/B=1-359"/>
</dbReference>
<dbReference type="PDB" id="4M6U">
    <property type="method" value="X-ray"/>
    <property type="resolution" value="1.80 A"/>
    <property type="chains" value="A/B=1-359"/>
</dbReference>
<dbReference type="PDB" id="4X2P">
    <property type="method" value="X-ray"/>
    <property type="resolution" value="1.65 A"/>
    <property type="chains" value="A=1-359"/>
</dbReference>
<dbReference type="PDB" id="6VIM">
    <property type="method" value="X-ray"/>
    <property type="resolution" value="2.00 A"/>
    <property type="chains" value="A/B/C/D/E/F/G/H=1-359"/>
</dbReference>
<dbReference type="PDB" id="7MQX">
    <property type="method" value="X-ray"/>
    <property type="resolution" value="1.91 A"/>
    <property type="chains" value="A/B/C/D/E/F/G/H=1-359"/>
</dbReference>
<dbReference type="PDBsum" id="1DTN"/>
<dbReference type="PDBsum" id="1MDL"/>
<dbReference type="PDBsum" id="1MDR"/>
<dbReference type="PDBsum" id="1MNS"/>
<dbReference type="PDBsum" id="1MRA"/>
<dbReference type="PDBsum" id="2MNR"/>
<dbReference type="PDBsum" id="3UXK"/>
<dbReference type="PDBsum" id="3UXL"/>
<dbReference type="PDBsum" id="4FP1"/>
<dbReference type="PDBsum" id="4HNC"/>
<dbReference type="PDBsum" id="4M6U"/>
<dbReference type="PDBsum" id="4X2P"/>
<dbReference type="PDBsum" id="6VIM"/>
<dbReference type="PDBsum" id="7MQX"/>
<dbReference type="SMR" id="P11444"/>
<dbReference type="BindingDB" id="P11444"/>
<dbReference type="ChEMBL" id="CHEMBL4739"/>
<dbReference type="DrugBank" id="DB02280">
    <property type="generic name" value="(R)-Mandelic acid"/>
</dbReference>
<dbReference type="DrugBank" id="DB07381">
    <property type="generic name" value="(S)-atrolactic acid"/>
</dbReference>
<dbReference type="DrugBank" id="DB03357">
    <property type="generic name" value="(S)-Mandelic acid"/>
</dbReference>
<dbReference type="BioCyc" id="MetaCyc:MONOMER-2421"/>
<dbReference type="BRENDA" id="5.1.2.2">
    <property type="organism ID" value="5092"/>
</dbReference>
<dbReference type="UniPathway" id="UPA00873">
    <property type="reaction ID" value="UER00852"/>
</dbReference>
<dbReference type="EvolutionaryTrace" id="P11444"/>
<dbReference type="GO" id="GO:0016836">
    <property type="term" value="F:hydro-lyase activity"/>
    <property type="evidence" value="ECO:0007669"/>
    <property type="project" value="TreeGrafter"/>
</dbReference>
<dbReference type="GO" id="GO:0000287">
    <property type="term" value="F:magnesium ion binding"/>
    <property type="evidence" value="ECO:0007669"/>
    <property type="project" value="TreeGrafter"/>
</dbReference>
<dbReference type="GO" id="GO:0018838">
    <property type="term" value="F:mandelate racemase activity"/>
    <property type="evidence" value="ECO:0007669"/>
    <property type="project" value="UniProtKB-EC"/>
</dbReference>
<dbReference type="GO" id="GO:0009063">
    <property type="term" value="P:amino acid catabolic process"/>
    <property type="evidence" value="ECO:0007669"/>
    <property type="project" value="InterPro"/>
</dbReference>
<dbReference type="GO" id="GO:0016052">
    <property type="term" value="P:carbohydrate catabolic process"/>
    <property type="evidence" value="ECO:0007669"/>
    <property type="project" value="TreeGrafter"/>
</dbReference>
<dbReference type="GO" id="GO:0019596">
    <property type="term" value="P:mandelate catabolic process"/>
    <property type="evidence" value="ECO:0007669"/>
    <property type="project" value="UniProtKB-UniPathway"/>
</dbReference>
<dbReference type="CDD" id="cd03321">
    <property type="entry name" value="mandelate_racemase"/>
    <property type="match status" value="1"/>
</dbReference>
<dbReference type="Gene3D" id="3.20.20.120">
    <property type="entry name" value="Enolase-like C-terminal domain"/>
    <property type="match status" value="1"/>
</dbReference>
<dbReference type="Gene3D" id="3.30.390.10">
    <property type="entry name" value="Enolase-like, N-terminal domain"/>
    <property type="match status" value="1"/>
</dbReference>
<dbReference type="InterPro" id="IPR036849">
    <property type="entry name" value="Enolase-like_C_sf"/>
</dbReference>
<dbReference type="InterPro" id="IPR029017">
    <property type="entry name" value="Enolase-like_N"/>
</dbReference>
<dbReference type="InterPro" id="IPR029065">
    <property type="entry name" value="Enolase_C-like"/>
</dbReference>
<dbReference type="InterPro" id="IPR018110">
    <property type="entry name" value="Mandel_Rmase/mucon_lact_enz_CS"/>
</dbReference>
<dbReference type="InterPro" id="IPR015654">
    <property type="entry name" value="Mandelate_racemase"/>
</dbReference>
<dbReference type="InterPro" id="IPR013342">
    <property type="entry name" value="Mandelate_racemase_C"/>
</dbReference>
<dbReference type="InterPro" id="IPR013341">
    <property type="entry name" value="Mandelate_racemase_N_dom"/>
</dbReference>
<dbReference type="InterPro" id="IPR046945">
    <property type="entry name" value="RHMD-like"/>
</dbReference>
<dbReference type="PANTHER" id="PTHR13794">
    <property type="entry name" value="ENOLASE SUPERFAMILY, MANDELATE RACEMASE"/>
    <property type="match status" value="1"/>
</dbReference>
<dbReference type="PANTHER" id="PTHR13794:SF58">
    <property type="entry name" value="MITOCHONDRIAL ENOLASE SUPERFAMILY MEMBER 1"/>
    <property type="match status" value="1"/>
</dbReference>
<dbReference type="Pfam" id="PF13378">
    <property type="entry name" value="MR_MLE_C"/>
    <property type="match status" value="1"/>
</dbReference>
<dbReference type="Pfam" id="PF02746">
    <property type="entry name" value="MR_MLE_N"/>
    <property type="match status" value="1"/>
</dbReference>
<dbReference type="SFLD" id="SFLDF00004">
    <property type="entry name" value="mandelate_racemase"/>
    <property type="match status" value="1"/>
</dbReference>
<dbReference type="SFLD" id="SFLDG00179">
    <property type="entry name" value="mandelate_racemase"/>
    <property type="match status" value="1"/>
</dbReference>
<dbReference type="SMART" id="SM00922">
    <property type="entry name" value="MR_MLE"/>
    <property type="match status" value="1"/>
</dbReference>
<dbReference type="SUPFAM" id="SSF51604">
    <property type="entry name" value="Enolase C-terminal domain-like"/>
    <property type="match status" value="1"/>
</dbReference>
<dbReference type="SUPFAM" id="SSF54826">
    <property type="entry name" value="Enolase N-terminal domain-like"/>
    <property type="match status" value="1"/>
</dbReference>
<dbReference type="PROSITE" id="PS00908">
    <property type="entry name" value="MR_MLE_1"/>
    <property type="match status" value="1"/>
</dbReference>
<dbReference type="PROSITE" id="PS00909">
    <property type="entry name" value="MR_MLE_2"/>
    <property type="match status" value="1"/>
</dbReference>
<organism>
    <name type="scientific">Pseudomonas putida</name>
    <name type="common">Arthrobacter siderocapsulatus</name>
    <dbReference type="NCBI Taxonomy" id="303"/>
    <lineage>
        <taxon>Bacteria</taxon>
        <taxon>Pseudomonadati</taxon>
        <taxon>Pseudomonadota</taxon>
        <taxon>Gammaproteobacteria</taxon>
        <taxon>Pseudomonadales</taxon>
        <taxon>Pseudomonadaceae</taxon>
        <taxon>Pseudomonas</taxon>
    </lineage>
</organism>
<sequence>MSEVLITGLRTRAVNVPLAYPVHTAVGTVGTAPLVLIDLATSAGVVGHSYLFAYTPVALKSLKQLLDDMAAMIVNEPLAPVSLEAMLAKRFCLAGYTGLIRMAAAGIDMAAWDALGKVHETPLVKLLGANARPVQAYDSHSLDGVKLATERAVTAAELGFRAVKTKIGYPALDQDLAVVRSIRQAVGDDFGIMVDYNQSLDVPAAIKRSQALQQEGVTWIEEPTLQHDYEGHQRIQSKLNVPVQMGENWLGPEEMFKALSIGACRLAMPDAMKIGGVTGWIRASALAQQFGIPMSSHLFQEISAHLLAATPTAHWLERLDLAGSVIEPTLTFEGGNAVIPDLPGVGIIWREKEIGKYLV</sequence>
<reference key="1">
    <citation type="journal article" date="1988" name="Biochemistry">
        <title>Cloning, DNA sequence analysis, and expression in Escherichia coli of the gene for mandelate racemase from Pseudomonas putida.</title>
        <authorList>
            <person name="Ransom S.C."/>
            <person name="Gerlt J.A."/>
            <person name="Powers V.M."/>
            <person name="Kenyon G.L."/>
        </authorList>
    </citation>
    <scope>NUCLEOTIDE SEQUENCE [GENOMIC DNA]</scope>
    <source>
        <strain>ATCC 12633 / DSM 291 / JCM 13063 / CCUG 12690 / LMG 2257 / NBRC 14164 / NCIMB 9494 / NCTC 10936 / VKM B-2187 / Stanier 90</strain>
    </source>
</reference>
<reference key="2">
    <citation type="journal article" date="1990" name="Biochemistry">
        <title>Mandelate pathway of Pseudomonas putida: sequence relationships involving mandelate racemase, (S)-mandelate dehydrogenase, and benzoylformate decarboxylase and expression of benzoylformate decarboxylase in Escherichia coli.</title>
        <authorList>
            <person name="Tsou A.Y."/>
            <person name="Ransom S.C."/>
            <person name="Gerlt J.A."/>
            <person name="Buechter D.D."/>
            <person name="Babbitt P.C."/>
            <person name="Kenyon G.L."/>
        </authorList>
    </citation>
    <scope>NUCLEOTIDE SEQUENCE [GENOMIC DNA]</scope>
    <source>
        <strain>ATCC 12633 / DSM 291 / JCM 13063 / CCUG 12690 / LMG 2257 / NBRC 14164 / NCIMB 9494 / NCTC 10936 / VKM B-2187 / Stanier 90</strain>
    </source>
</reference>
<reference key="3">
    <citation type="journal article" date="1990" name="Nature">
        <title>Mandelate racemase and muconate lactonizing enzyme are mechanistically distinct and structurally homologous.</title>
        <authorList>
            <person name="Neidhart D.J."/>
            <person name="Kenyon G.L."/>
            <person name="Gerlt J.A."/>
            <person name="Petsko G.A."/>
        </authorList>
    </citation>
    <scope>SIMILARITY TO MLE</scope>
</reference>
<reference key="4">
    <citation type="journal article" date="1991" name="Biochemistry">
        <title>Mechanism of the reaction catalyzed by mandelate racemase. 3. Asymmetry in reactions catalyzed by the H297N mutant.</title>
        <authorList>
            <person name="Landro J.A."/>
            <person name="Kallarakal A.T."/>
            <person name="Ransom S.C."/>
            <person name="Gerlt J.A."/>
            <person name="Kozarich J.W."/>
            <person name="Neidhart D.J."/>
            <person name="Kenyon G.L."/>
        </authorList>
    </citation>
    <scope>MUTAGENESIS OF HIS-297</scope>
    <scope>CATALYTIC ACTIVITY</scope>
</reference>
<reference key="5">
    <citation type="journal article" date="1991" name="Biochemistry">
        <title>Mechanism of the reaction catalyzed by mandelate racemase. 2. Crystal structure of mandelate racemase at 2.5-A resolution: identification of the active site and possible catalytic residues.</title>
        <authorList>
            <person name="Neidhart D.J."/>
            <person name="Howell P.L."/>
            <person name="Petsko G.A."/>
            <person name="Powers V.M."/>
            <person name="Li R.S."/>
            <person name="Kenyon G.L."/>
            <person name="Gerlt J.A."/>
        </authorList>
    </citation>
    <scope>X-RAY CRYSTALLOGRAPHY (1.90 ANGSTROMS) OF 3-359 IN COMPLEX WITH MANGANESE</scope>
    <scope>COFACTOR</scope>
</reference>
<reference key="6">
    <citation type="journal article" date="1995" name="Biochemistry">
        <title>Mechanism of the reaction catalyzed by mandelate racemase: importance of electrophilic catalysis by glutamic acid 317.</title>
        <authorList>
            <person name="Mitra B."/>
            <person name="Kallarakal A.T."/>
            <person name="Kozarich J.W."/>
            <person name="Gerlt J.A."/>
            <person name="Clifton J.G."/>
            <person name="Petsko G.A."/>
            <person name="Kenyon G.L."/>
        </authorList>
    </citation>
    <scope>X-RAY CRYSTALLOGRAPHY (2.1 ANGSTROMS) OF MUTANT GLN-317 IN COMPLEX WITH MAGNESIUM</scope>
    <scope>COFACTOR</scope>
    <scope>MUTAGENESIS OF GLU-317</scope>
    <scope>CATALYTIC ACTIVITY</scope>
</reference>
<reference key="7">
    <citation type="journal article" date="1995" name="Biochemistry">
        <title>Mechanism of the reaction catalyzed by mandelate racemase: structure and mechanistic properties of the K166R mutant.</title>
        <authorList>
            <person name="Kallarakal A.T."/>
            <person name="Mitra B."/>
            <person name="Kozarich J.W."/>
            <person name="Gerlt J.A."/>
            <person name="Clifton J.G."/>
            <person name="Petsko G.A."/>
            <person name="Kenyon G.L."/>
        </authorList>
    </citation>
    <scope>X-RAY CRYSTALLOGRAPHY (1.85 ANGSTROMS) OF MUTANT ARG-166 IN COMPLEX WITH SUBSTRATE AND MAGNESIUM</scope>
    <scope>COFACTOR</scope>
    <scope>MUTAGENESIS OF LYS-166</scope>
    <scope>CATALYTIC ACTIVITY</scope>
</reference>
<feature type="chain" id="PRO_0000171247" description="Mandelate racemase">
    <location>
        <begin position="1"/>
        <end position="359"/>
    </location>
</feature>
<feature type="active site" description="Proton acceptor; specific for S-mandelate">
    <location>
        <position position="166"/>
    </location>
</feature>
<feature type="active site" description="Proton acceptor; specific for R-mandelate">
    <location>
        <position position="297"/>
    </location>
</feature>
<feature type="binding site" evidence="3 4 6">
    <location>
        <position position="195"/>
    </location>
    <ligand>
        <name>Mg(2+)</name>
        <dbReference type="ChEBI" id="CHEBI:18420"/>
    </ligand>
</feature>
<feature type="binding site" evidence="3 4 6">
    <location>
        <position position="221"/>
    </location>
    <ligand>
        <name>Mg(2+)</name>
        <dbReference type="ChEBI" id="CHEBI:18420"/>
    </ligand>
</feature>
<feature type="binding site" evidence="3 4 6">
    <location>
        <position position="247"/>
    </location>
    <ligand>
        <name>Mg(2+)</name>
        <dbReference type="ChEBI" id="CHEBI:18420"/>
    </ligand>
</feature>
<feature type="binding site" evidence="3 4 6">
    <location>
        <position position="317"/>
    </location>
    <ligand>
        <name>substrate</name>
    </ligand>
</feature>
<feature type="mutagenesis site" description="Loss of activity." evidence="4">
    <original>K</original>
    <variation>A</variation>
    <variation>M</variation>
    <variation>Q</variation>
    <location>
        <position position="166"/>
    </location>
</feature>
<feature type="mutagenesis site" description="Loss of activity." evidence="2">
    <original>H</original>
    <variation>N</variation>
    <location>
        <position position="297"/>
    </location>
</feature>
<feature type="mutagenesis site" description="Reduces activity 10000-fold." evidence="3">
    <original>E</original>
    <variation>Q</variation>
    <location>
        <position position="317"/>
    </location>
</feature>
<feature type="strand" evidence="8">
    <location>
        <begin position="5"/>
        <end position="23"/>
    </location>
</feature>
<feature type="strand" evidence="8">
    <location>
        <begin position="28"/>
        <end position="41"/>
    </location>
</feature>
<feature type="strand" evidence="8">
    <location>
        <begin position="46"/>
        <end position="52"/>
    </location>
</feature>
<feature type="helix" evidence="8">
    <location>
        <begin position="56"/>
        <end position="58"/>
    </location>
</feature>
<feature type="helix" evidence="8">
    <location>
        <begin position="59"/>
        <end position="73"/>
    </location>
</feature>
<feature type="strand" evidence="8">
    <location>
        <begin position="76"/>
        <end position="78"/>
    </location>
</feature>
<feature type="helix" evidence="8">
    <location>
        <begin position="80"/>
        <end position="90"/>
    </location>
</feature>
<feature type="turn" evidence="8">
    <location>
        <begin position="91"/>
        <end position="94"/>
    </location>
</feature>
<feature type="helix" evidence="8">
    <location>
        <begin position="98"/>
        <end position="118"/>
    </location>
</feature>
<feature type="helix" evidence="8">
    <location>
        <begin position="123"/>
        <end position="126"/>
    </location>
</feature>
<feature type="strand" evidence="8">
    <location>
        <begin position="134"/>
        <end position="139"/>
    </location>
</feature>
<feature type="helix" evidence="8">
    <location>
        <begin position="144"/>
        <end position="157"/>
    </location>
</feature>
<feature type="strand" evidence="8">
    <location>
        <begin position="161"/>
        <end position="166"/>
    </location>
</feature>
<feature type="helix" evidence="8">
    <location>
        <begin position="172"/>
        <end position="186"/>
    </location>
</feature>
<feature type="strand" evidence="8">
    <location>
        <begin position="188"/>
        <end position="195"/>
    </location>
</feature>
<feature type="helix" evidence="8">
    <location>
        <begin position="202"/>
        <end position="215"/>
    </location>
</feature>
<feature type="strand" evidence="7">
    <location>
        <begin position="218"/>
        <end position="221"/>
    </location>
</feature>
<feature type="helix" evidence="8">
    <location>
        <begin position="229"/>
        <end position="237"/>
    </location>
</feature>
<feature type="strand" evidence="8">
    <location>
        <begin position="243"/>
        <end position="245"/>
    </location>
</feature>
<feature type="helix" evidence="8">
    <location>
        <begin position="252"/>
        <end position="260"/>
    </location>
</feature>
<feature type="strand" evidence="8">
    <location>
        <begin position="265"/>
        <end position="267"/>
    </location>
</feature>
<feature type="turn" evidence="8">
    <location>
        <begin position="271"/>
        <end position="275"/>
    </location>
</feature>
<feature type="helix" evidence="8">
    <location>
        <begin position="276"/>
        <end position="290"/>
    </location>
</feature>
<feature type="helix" evidence="8">
    <location>
        <begin position="300"/>
        <end position="308"/>
    </location>
</feature>
<feature type="strand" evidence="8">
    <location>
        <begin position="316"/>
        <end position="318"/>
    </location>
</feature>
<feature type="turn" evidence="8">
    <location>
        <begin position="321"/>
        <end position="325"/>
    </location>
</feature>
<feature type="strand" evidence="8">
    <location>
        <begin position="330"/>
        <end position="333"/>
    </location>
</feature>
<feature type="strand" evidence="8">
    <location>
        <begin position="336"/>
        <end position="338"/>
    </location>
</feature>
<feature type="strand" evidence="8">
    <location>
        <begin position="341"/>
        <end position="344"/>
    </location>
</feature>
<feature type="helix" evidence="8">
    <location>
        <begin position="351"/>
        <end position="357"/>
    </location>
</feature>